<protein>
    <recommendedName>
        <fullName evidence="1">Small ribosomal subunit protein bS16c</fullName>
    </recommendedName>
    <alternativeName>
        <fullName evidence="2">30S ribosomal protein S16, chloroplastic</fullName>
    </alternativeName>
</protein>
<comment type="subcellular location">
    <subcellularLocation>
        <location>Plastid</location>
        <location>Chloroplast</location>
    </subcellularLocation>
</comment>
<comment type="similarity">
    <text evidence="1">Belongs to the bacterial ribosomal protein bS16 family.</text>
</comment>
<name>RR16_SINAL</name>
<proteinExistence type="inferred from homology"/>
<evidence type="ECO:0000255" key="1">
    <source>
        <dbReference type="HAMAP-Rule" id="MF_00385"/>
    </source>
</evidence>
<evidence type="ECO:0000305" key="2"/>
<organism>
    <name type="scientific">Sinapis alba</name>
    <name type="common">White mustard</name>
    <name type="synonym">Brassica hirta</name>
    <dbReference type="NCBI Taxonomy" id="3728"/>
    <lineage>
        <taxon>Eukaryota</taxon>
        <taxon>Viridiplantae</taxon>
        <taxon>Streptophyta</taxon>
        <taxon>Embryophyta</taxon>
        <taxon>Tracheophyta</taxon>
        <taxon>Spermatophyta</taxon>
        <taxon>Magnoliopsida</taxon>
        <taxon>eudicotyledons</taxon>
        <taxon>Gunneridae</taxon>
        <taxon>Pentapetalae</taxon>
        <taxon>rosids</taxon>
        <taxon>malvids</taxon>
        <taxon>Brassicales</taxon>
        <taxon>Brassicaceae</taxon>
        <taxon>Brassiceae</taxon>
        <taxon>Sinapis</taxon>
    </lineage>
</organism>
<dbReference type="EMBL" id="X13609">
    <property type="protein sequence ID" value="CAA31944.1"/>
    <property type="molecule type" value="Genomic_DNA"/>
</dbReference>
<dbReference type="PIR" id="A48313">
    <property type="entry name" value="R3IS16"/>
</dbReference>
<dbReference type="RefSeq" id="YP_009730649.1">
    <property type="nucleotide sequence ID" value="NC_045948.1"/>
</dbReference>
<dbReference type="SMR" id="P10359"/>
<dbReference type="GeneID" id="43960577"/>
<dbReference type="GO" id="GO:0009507">
    <property type="term" value="C:chloroplast"/>
    <property type="evidence" value="ECO:0007669"/>
    <property type="project" value="UniProtKB-SubCell"/>
</dbReference>
<dbReference type="GO" id="GO:0005739">
    <property type="term" value="C:mitochondrion"/>
    <property type="evidence" value="ECO:0007669"/>
    <property type="project" value="GOC"/>
</dbReference>
<dbReference type="GO" id="GO:0015935">
    <property type="term" value="C:small ribosomal subunit"/>
    <property type="evidence" value="ECO:0007669"/>
    <property type="project" value="TreeGrafter"/>
</dbReference>
<dbReference type="GO" id="GO:0003735">
    <property type="term" value="F:structural constituent of ribosome"/>
    <property type="evidence" value="ECO:0007669"/>
    <property type="project" value="InterPro"/>
</dbReference>
<dbReference type="GO" id="GO:0032543">
    <property type="term" value="P:mitochondrial translation"/>
    <property type="evidence" value="ECO:0007669"/>
    <property type="project" value="TreeGrafter"/>
</dbReference>
<dbReference type="FunFam" id="3.30.1320.10:FF:000003">
    <property type="entry name" value="30S ribosomal protein S16, chloroplastic"/>
    <property type="match status" value="1"/>
</dbReference>
<dbReference type="Gene3D" id="3.30.1320.10">
    <property type="match status" value="1"/>
</dbReference>
<dbReference type="HAMAP" id="MF_00385">
    <property type="entry name" value="Ribosomal_bS16"/>
    <property type="match status" value="1"/>
</dbReference>
<dbReference type="InterPro" id="IPR000307">
    <property type="entry name" value="Ribosomal_bS16"/>
</dbReference>
<dbReference type="InterPro" id="IPR020592">
    <property type="entry name" value="Ribosomal_bS16_CS"/>
</dbReference>
<dbReference type="InterPro" id="IPR023803">
    <property type="entry name" value="Ribosomal_bS16_dom_sf"/>
</dbReference>
<dbReference type="NCBIfam" id="TIGR00002">
    <property type="entry name" value="S16"/>
    <property type="match status" value="1"/>
</dbReference>
<dbReference type="PANTHER" id="PTHR12919">
    <property type="entry name" value="30S RIBOSOMAL PROTEIN S16"/>
    <property type="match status" value="1"/>
</dbReference>
<dbReference type="PANTHER" id="PTHR12919:SF20">
    <property type="entry name" value="SMALL RIBOSOMAL SUBUNIT PROTEIN BS16M"/>
    <property type="match status" value="1"/>
</dbReference>
<dbReference type="Pfam" id="PF00886">
    <property type="entry name" value="Ribosomal_S16"/>
    <property type="match status" value="1"/>
</dbReference>
<dbReference type="SUPFAM" id="SSF54565">
    <property type="entry name" value="Ribosomal protein S16"/>
    <property type="match status" value="1"/>
</dbReference>
<dbReference type="PROSITE" id="PS00732">
    <property type="entry name" value="RIBOSOMAL_S16"/>
    <property type="match status" value="1"/>
</dbReference>
<feature type="chain" id="PRO_0000167319" description="Small ribosomal subunit protein bS16c">
    <location>
        <begin position="1"/>
        <end position="88"/>
    </location>
</feature>
<sequence>MVKLRLKRCGRKQRAVYRIVAIDVRSRREGRDLRKVGFYDPITNQTYLNLPAILDFLKKGAQPTRTVHDISKKAGIFTELNLNKTKLN</sequence>
<keyword id="KW-0150">Chloroplast</keyword>
<keyword id="KW-0934">Plastid</keyword>
<keyword id="KW-0687">Ribonucleoprotein</keyword>
<keyword id="KW-0689">Ribosomal protein</keyword>
<accession>P10359</accession>
<geneLocation type="chloroplast"/>
<reference key="1">
    <citation type="journal article" date="1989" name="Curr. Genet.">
        <title>Structure and expression of a split chloroplast gene from mustard (Sinapis alba): ribosomal protein gene rps16 reveals unusual transcriptional features and complex RNA maturation.</title>
        <authorList>
            <person name="Neuhaus H."/>
            <person name="Scholz A."/>
            <person name="Link G."/>
        </authorList>
    </citation>
    <scope>NUCLEOTIDE SEQUENCE [GENOMIC DNA]</scope>
    <source>
        <strain>cv. Albatros</strain>
        <tissue>Cotyledon</tissue>
    </source>
</reference>
<gene>
    <name evidence="1" type="primary">rps16</name>
</gene>